<name>CREB3_MOUSE</name>
<proteinExistence type="evidence at transcript level"/>
<organism>
    <name type="scientific">Mus musculus</name>
    <name type="common">Mouse</name>
    <dbReference type="NCBI Taxonomy" id="10090"/>
    <lineage>
        <taxon>Eukaryota</taxon>
        <taxon>Metazoa</taxon>
        <taxon>Chordata</taxon>
        <taxon>Craniata</taxon>
        <taxon>Vertebrata</taxon>
        <taxon>Euteleostomi</taxon>
        <taxon>Mammalia</taxon>
        <taxon>Eutheria</taxon>
        <taxon>Euarchontoglires</taxon>
        <taxon>Glires</taxon>
        <taxon>Rodentia</taxon>
        <taxon>Myomorpha</taxon>
        <taxon>Muroidea</taxon>
        <taxon>Muridae</taxon>
        <taxon>Murinae</taxon>
        <taxon>Mus</taxon>
        <taxon>Mus</taxon>
    </lineage>
</organism>
<reference key="1">
    <citation type="journal article" date="1994" name="Gene">
        <title>LZIP-1 and LZIP-2: two novel members of the bZIP family.</title>
        <authorList>
            <person name="Burbelo P.D."/>
            <person name="Gabriel G.C."/>
            <person name="Kibbey M.C."/>
            <person name="Yamada Y."/>
            <person name="Kleinman H.K."/>
            <person name="Weeks B.S."/>
        </authorList>
    </citation>
    <scope>NUCLEOTIDE SEQUENCE (ISOFORMS 1 AND 2)</scope>
    <scope>TISSUE SPECIFICITY</scope>
    <source>
        <strain>BALB/cJ</strain>
    </source>
</reference>
<reference key="2">
    <citation type="journal article" date="2004" name="Genome Res.">
        <title>The status, quality, and expansion of the NIH full-length cDNA project: the Mammalian Gene Collection (MGC).</title>
        <authorList>
            <consortium name="The MGC Project Team"/>
        </authorList>
    </citation>
    <scope>NUCLEOTIDE SEQUENCE [LARGE SCALE MRNA] (ISOFORM 2)</scope>
    <source>
        <strain>FVB/N</strain>
        <tissue>Mammary tumor</tissue>
    </source>
</reference>
<reference key="3">
    <citation type="journal article" date="2005" name="Science">
        <title>The transcriptional landscape of the mammalian genome.</title>
        <authorList>
            <person name="Carninci P."/>
            <person name="Kasukawa T."/>
            <person name="Katayama S."/>
            <person name="Gough J."/>
            <person name="Frith M.C."/>
            <person name="Maeda N."/>
            <person name="Oyama R."/>
            <person name="Ravasi T."/>
            <person name="Lenhard B."/>
            <person name="Wells C."/>
            <person name="Kodzius R."/>
            <person name="Shimokawa K."/>
            <person name="Bajic V.B."/>
            <person name="Brenner S.E."/>
            <person name="Batalov S."/>
            <person name="Forrest A.R."/>
            <person name="Zavolan M."/>
            <person name="Davis M.J."/>
            <person name="Wilming L.G."/>
            <person name="Aidinis V."/>
            <person name="Allen J.E."/>
            <person name="Ambesi-Impiombato A."/>
            <person name="Apweiler R."/>
            <person name="Aturaliya R.N."/>
            <person name="Bailey T.L."/>
            <person name="Bansal M."/>
            <person name="Baxter L."/>
            <person name="Beisel K.W."/>
            <person name="Bersano T."/>
            <person name="Bono H."/>
            <person name="Chalk A.M."/>
            <person name="Chiu K.P."/>
            <person name="Choudhary V."/>
            <person name="Christoffels A."/>
            <person name="Clutterbuck D.R."/>
            <person name="Crowe M.L."/>
            <person name="Dalla E."/>
            <person name="Dalrymple B.P."/>
            <person name="de Bono B."/>
            <person name="Della Gatta G."/>
            <person name="di Bernardo D."/>
            <person name="Down T."/>
            <person name="Engstrom P."/>
            <person name="Fagiolini M."/>
            <person name="Faulkner G."/>
            <person name="Fletcher C.F."/>
            <person name="Fukushima T."/>
            <person name="Furuno M."/>
            <person name="Futaki S."/>
            <person name="Gariboldi M."/>
            <person name="Georgii-Hemming P."/>
            <person name="Gingeras T.R."/>
            <person name="Gojobori T."/>
            <person name="Green R.E."/>
            <person name="Gustincich S."/>
            <person name="Harbers M."/>
            <person name="Hayashi Y."/>
            <person name="Hensch T.K."/>
            <person name="Hirokawa N."/>
            <person name="Hill D."/>
            <person name="Huminiecki L."/>
            <person name="Iacono M."/>
            <person name="Ikeo K."/>
            <person name="Iwama A."/>
            <person name="Ishikawa T."/>
            <person name="Jakt M."/>
            <person name="Kanapin A."/>
            <person name="Katoh M."/>
            <person name="Kawasawa Y."/>
            <person name="Kelso J."/>
            <person name="Kitamura H."/>
            <person name="Kitano H."/>
            <person name="Kollias G."/>
            <person name="Krishnan S.P."/>
            <person name="Kruger A."/>
            <person name="Kummerfeld S.K."/>
            <person name="Kurochkin I.V."/>
            <person name="Lareau L.F."/>
            <person name="Lazarevic D."/>
            <person name="Lipovich L."/>
            <person name="Liu J."/>
            <person name="Liuni S."/>
            <person name="McWilliam S."/>
            <person name="Madan Babu M."/>
            <person name="Madera M."/>
            <person name="Marchionni L."/>
            <person name="Matsuda H."/>
            <person name="Matsuzawa S."/>
            <person name="Miki H."/>
            <person name="Mignone F."/>
            <person name="Miyake S."/>
            <person name="Morris K."/>
            <person name="Mottagui-Tabar S."/>
            <person name="Mulder N."/>
            <person name="Nakano N."/>
            <person name="Nakauchi H."/>
            <person name="Ng P."/>
            <person name="Nilsson R."/>
            <person name="Nishiguchi S."/>
            <person name="Nishikawa S."/>
            <person name="Nori F."/>
            <person name="Ohara O."/>
            <person name="Okazaki Y."/>
            <person name="Orlando V."/>
            <person name="Pang K.C."/>
            <person name="Pavan W.J."/>
            <person name="Pavesi G."/>
            <person name="Pesole G."/>
            <person name="Petrovsky N."/>
            <person name="Piazza S."/>
            <person name="Reed J."/>
            <person name="Reid J.F."/>
            <person name="Ring B.Z."/>
            <person name="Ringwald M."/>
            <person name="Rost B."/>
            <person name="Ruan Y."/>
            <person name="Salzberg S.L."/>
            <person name="Sandelin A."/>
            <person name="Schneider C."/>
            <person name="Schoenbach C."/>
            <person name="Sekiguchi K."/>
            <person name="Semple C.A."/>
            <person name="Seno S."/>
            <person name="Sessa L."/>
            <person name="Sheng Y."/>
            <person name="Shibata Y."/>
            <person name="Shimada H."/>
            <person name="Shimada K."/>
            <person name="Silva D."/>
            <person name="Sinclair B."/>
            <person name="Sperling S."/>
            <person name="Stupka E."/>
            <person name="Sugiura K."/>
            <person name="Sultana R."/>
            <person name="Takenaka Y."/>
            <person name="Taki K."/>
            <person name="Tammoja K."/>
            <person name="Tan S.L."/>
            <person name="Tang S."/>
            <person name="Taylor M.S."/>
            <person name="Tegner J."/>
            <person name="Teichmann S.A."/>
            <person name="Ueda H.R."/>
            <person name="van Nimwegen E."/>
            <person name="Verardo R."/>
            <person name="Wei C.L."/>
            <person name="Yagi K."/>
            <person name="Yamanishi H."/>
            <person name="Zabarovsky E."/>
            <person name="Zhu S."/>
            <person name="Zimmer A."/>
            <person name="Hide W."/>
            <person name="Bult C."/>
            <person name="Grimmond S.M."/>
            <person name="Teasdale R.D."/>
            <person name="Liu E.T."/>
            <person name="Brusic V."/>
            <person name="Quackenbush J."/>
            <person name="Wahlestedt C."/>
            <person name="Mattick J.S."/>
            <person name="Hume D.A."/>
            <person name="Kai C."/>
            <person name="Sasaki D."/>
            <person name="Tomaru Y."/>
            <person name="Fukuda S."/>
            <person name="Kanamori-Katayama M."/>
            <person name="Suzuki M."/>
            <person name="Aoki J."/>
            <person name="Arakawa T."/>
            <person name="Iida J."/>
            <person name="Imamura K."/>
            <person name="Itoh M."/>
            <person name="Kato T."/>
            <person name="Kawaji H."/>
            <person name="Kawagashira N."/>
            <person name="Kawashima T."/>
            <person name="Kojima M."/>
            <person name="Kondo S."/>
            <person name="Konno H."/>
            <person name="Nakano K."/>
            <person name="Ninomiya N."/>
            <person name="Nishio T."/>
            <person name="Okada M."/>
            <person name="Plessy C."/>
            <person name="Shibata K."/>
            <person name="Shiraki T."/>
            <person name="Suzuki S."/>
            <person name="Tagami M."/>
            <person name="Waki K."/>
            <person name="Watahiki A."/>
            <person name="Okamura-Oho Y."/>
            <person name="Suzuki H."/>
            <person name="Kawai J."/>
            <person name="Hayashizaki Y."/>
        </authorList>
    </citation>
    <scope>NUCLEOTIDE SEQUENCE [LARGE SCALE MRNA] OF 157-404</scope>
    <source>
        <strain>C57BL/6J</strain>
        <tissue>Pancreas</tissue>
    </source>
</reference>
<feature type="chain" id="PRO_0000076603" description="Cyclic AMP-responsive element-binding protein 3">
    <location>
        <begin position="1"/>
        <end position="404"/>
    </location>
</feature>
<feature type="chain" id="PRO_0000296205" description="Processed cyclic AMP-responsive element-binding protein 3">
    <location>
        <begin position="1"/>
        <end status="unknown"/>
    </location>
</feature>
<feature type="topological domain" description="Cytoplasmic" evidence="3">
    <location>
        <begin position="1"/>
        <end position="261"/>
    </location>
</feature>
<feature type="transmembrane region" description="Helical; Signal-anchor for type II membrane protein" evidence="3">
    <location>
        <begin position="262"/>
        <end position="282"/>
    </location>
</feature>
<feature type="topological domain" description="Lumenal" evidence="3">
    <location>
        <begin position="283"/>
        <end position="404"/>
    </location>
</feature>
<feature type="domain" description="bZIP" evidence="4">
    <location>
        <begin position="185"/>
        <end position="248"/>
    </location>
</feature>
<feature type="region of interest" description="Basic motif" evidence="4">
    <location>
        <begin position="187"/>
        <end position="225"/>
    </location>
</feature>
<feature type="region of interest" description="Leucine-zipper" evidence="4">
    <location>
        <begin position="227"/>
        <end position="248"/>
    </location>
</feature>
<feature type="region of interest" description="Disordered" evidence="5">
    <location>
        <begin position="305"/>
        <end position="327"/>
    </location>
</feature>
<feature type="short sequence motif" description="LXXLL motif 1">
    <location>
        <begin position="19"/>
        <end position="23"/>
    </location>
</feature>
<feature type="short sequence motif" description="LXXLL motif 2">
    <location>
        <begin position="64"/>
        <end position="68"/>
    </location>
</feature>
<feature type="short sequence motif" description="HCFC1-binding-motif (HBM)">
    <location>
        <begin position="87"/>
        <end position="90"/>
    </location>
</feature>
<feature type="site" description="Cleavage; by PS1" evidence="1">
    <location>
        <begin position="301"/>
        <end position="302"/>
    </location>
</feature>
<feature type="glycosylation site" description="N-linked (GlcNAc...) asparagine" evidence="3">
    <location>
        <position position="342"/>
    </location>
</feature>
<feature type="glycosylation site" description="N-linked (GlcNAc...) asparagine" evidence="3">
    <location>
        <position position="380"/>
    </location>
</feature>
<feature type="splice variant" id="VSP_011839" description="In isoform 2." evidence="7">
    <location>
        <begin position="102"/>
        <end position="126"/>
    </location>
</feature>
<feature type="sequence conflict" description="In Ref. 1; AAC37645." evidence="8" ref="1">
    <original>S</original>
    <variation>T</variation>
    <location>
        <position position="263"/>
    </location>
</feature>
<keyword id="KW-0010">Activator</keyword>
<keyword id="KW-0025">Alternative splicing</keyword>
<keyword id="KW-0145">Chemotaxis</keyword>
<keyword id="KW-0963">Cytoplasm</keyword>
<keyword id="KW-0238">DNA-binding</keyword>
<keyword id="KW-0256">Endoplasmic reticulum</keyword>
<keyword id="KW-0325">Glycoprotein</keyword>
<keyword id="KW-0333">Golgi apparatus</keyword>
<keyword id="KW-0472">Membrane</keyword>
<keyword id="KW-0539">Nucleus</keyword>
<keyword id="KW-1185">Reference proteome</keyword>
<keyword id="KW-0678">Repressor</keyword>
<keyword id="KW-0735">Signal-anchor</keyword>
<keyword id="KW-0804">Transcription</keyword>
<keyword id="KW-0805">Transcription regulation</keyword>
<keyword id="KW-0812">Transmembrane</keyword>
<keyword id="KW-1133">Transmembrane helix</keyword>
<keyword id="KW-0834">Unfolded protein response</keyword>
<dbReference type="EMBL" id="L22167">
    <property type="protein sequence ID" value="AAC37645.1"/>
    <property type="molecule type" value="Unassigned_DNA"/>
</dbReference>
<dbReference type="EMBL" id="BC002094">
    <property type="protein sequence ID" value="AAH02094.1"/>
    <property type="molecule type" value="mRNA"/>
</dbReference>
<dbReference type="EMBL" id="AK007665">
    <property type="protein sequence ID" value="BAB25173.1"/>
    <property type="molecule type" value="mRNA"/>
</dbReference>
<dbReference type="CCDS" id="CCDS18102.1">
    <molecule id="Q61817-2"/>
</dbReference>
<dbReference type="SMR" id="Q61817"/>
<dbReference type="FunCoup" id="Q61817">
    <property type="interactions" value="667"/>
</dbReference>
<dbReference type="IntAct" id="Q61817">
    <property type="interactions" value="1"/>
</dbReference>
<dbReference type="STRING" id="10090.ENSMUSP00000100008"/>
<dbReference type="GlyCosmos" id="Q61817">
    <property type="glycosylation" value="2 sites, No reported glycans"/>
</dbReference>
<dbReference type="GlyGen" id="Q61817">
    <property type="glycosylation" value="2 sites"/>
</dbReference>
<dbReference type="PhosphoSitePlus" id="Q61817"/>
<dbReference type="PaxDb" id="10090-ENSMUSP00000100008"/>
<dbReference type="ProteomicsDB" id="284121">
    <molecule id="Q61817-1"/>
</dbReference>
<dbReference type="ProteomicsDB" id="284122">
    <molecule id="Q61817-2"/>
</dbReference>
<dbReference type="AGR" id="MGI:99946"/>
<dbReference type="MGI" id="MGI:99946">
    <property type="gene designation" value="Creb3"/>
</dbReference>
<dbReference type="eggNOG" id="KOG0709">
    <property type="taxonomic scope" value="Eukaryota"/>
</dbReference>
<dbReference type="InParanoid" id="Q61817"/>
<dbReference type="PhylomeDB" id="Q61817"/>
<dbReference type="Reactome" id="R-MMU-8874211">
    <property type="pathway name" value="CREB3 factors activate genes"/>
</dbReference>
<dbReference type="ChiTaRS" id="Creb3">
    <property type="organism name" value="mouse"/>
</dbReference>
<dbReference type="PRO" id="PR:Q61817"/>
<dbReference type="Proteomes" id="UP000000589">
    <property type="component" value="Unplaced"/>
</dbReference>
<dbReference type="RNAct" id="Q61817">
    <property type="molecule type" value="protein"/>
</dbReference>
<dbReference type="GO" id="GO:0005737">
    <property type="term" value="C:cytoplasm"/>
    <property type="evidence" value="ECO:0000250"/>
    <property type="project" value="UniProtKB"/>
</dbReference>
<dbReference type="GO" id="GO:0005789">
    <property type="term" value="C:endoplasmic reticulum membrane"/>
    <property type="evidence" value="ECO:0000250"/>
    <property type="project" value="UniProtKB"/>
</dbReference>
<dbReference type="GO" id="GO:0000139">
    <property type="term" value="C:Golgi membrane"/>
    <property type="evidence" value="ECO:0000250"/>
    <property type="project" value="UniProtKB"/>
</dbReference>
<dbReference type="GO" id="GO:0016020">
    <property type="term" value="C:membrane"/>
    <property type="evidence" value="ECO:0000250"/>
    <property type="project" value="UniProtKB"/>
</dbReference>
<dbReference type="GO" id="GO:0043025">
    <property type="term" value="C:neuronal cell body"/>
    <property type="evidence" value="ECO:0000250"/>
    <property type="project" value="UniProtKB"/>
</dbReference>
<dbReference type="GO" id="GO:0016604">
    <property type="term" value="C:nuclear body"/>
    <property type="evidence" value="ECO:0000250"/>
    <property type="project" value="UniProtKB"/>
</dbReference>
<dbReference type="GO" id="GO:0005634">
    <property type="term" value="C:nucleus"/>
    <property type="evidence" value="ECO:0000250"/>
    <property type="project" value="UniProtKB"/>
</dbReference>
<dbReference type="GO" id="GO:0003682">
    <property type="term" value="F:chromatin binding"/>
    <property type="evidence" value="ECO:0000250"/>
    <property type="project" value="UniProtKB"/>
</dbReference>
<dbReference type="GO" id="GO:0003700">
    <property type="term" value="F:DNA-binding transcription factor activity"/>
    <property type="evidence" value="ECO:0000250"/>
    <property type="project" value="UniProtKB"/>
</dbReference>
<dbReference type="GO" id="GO:0042803">
    <property type="term" value="F:protein homodimerization activity"/>
    <property type="evidence" value="ECO:0000250"/>
    <property type="project" value="UniProtKB"/>
</dbReference>
<dbReference type="GO" id="GO:0000977">
    <property type="term" value="F:RNA polymerase II transcription regulatory region sequence-specific DNA binding"/>
    <property type="evidence" value="ECO:0000250"/>
    <property type="project" value="UniProtKB"/>
</dbReference>
<dbReference type="GO" id="GO:0043565">
    <property type="term" value="F:sequence-specific DNA binding"/>
    <property type="evidence" value="ECO:0000314"/>
    <property type="project" value="MGI"/>
</dbReference>
<dbReference type="GO" id="GO:0006935">
    <property type="term" value="P:chemotaxis"/>
    <property type="evidence" value="ECO:0007669"/>
    <property type="project" value="UniProtKB-KW"/>
</dbReference>
<dbReference type="GO" id="GO:0019043">
    <property type="term" value="P:establishment of viral latency"/>
    <property type="evidence" value="ECO:0000250"/>
    <property type="project" value="UniProtKB"/>
</dbReference>
<dbReference type="GO" id="GO:0050930">
    <property type="term" value="P:induction of positive chemotaxis"/>
    <property type="evidence" value="ECO:0000250"/>
    <property type="project" value="UniProtKB"/>
</dbReference>
<dbReference type="GO" id="GO:0090045">
    <property type="term" value="P:positive regulation of deacetylase activity"/>
    <property type="evidence" value="ECO:0000250"/>
    <property type="project" value="UniProtKB"/>
</dbReference>
<dbReference type="GO" id="GO:0002230">
    <property type="term" value="P:positive regulation of defense response to virus by host"/>
    <property type="evidence" value="ECO:0000250"/>
    <property type="project" value="UniProtKB"/>
</dbReference>
<dbReference type="GO" id="GO:0090026">
    <property type="term" value="P:positive regulation of monocyte chemotaxis"/>
    <property type="evidence" value="ECO:0000250"/>
    <property type="project" value="UniProtKB"/>
</dbReference>
<dbReference type="GO" id="GO:0045944">
    <property type="term" value="P:positive regulation of transcription by RNA polymerase II"/>
    <property type="evidence" value="ECO:0000250"/>
    <property type="project" value="UniProtKB"/>
</dbReference>
<dbReference type="GO" id="GO:0042981">
    <property type="term" value="P:regulation of apoptotic process"/>
    <property type="evidence" value="ECO:0000250"/>
    <property type="project" value="UniProtKB"/>
</dbReference>
<dbReference type="GO" id="GO:0001558">
    <property type="term" value="P:regulation of cell growth"/>
    <property type="evidence" value="ECO:0000250"/>
    <property type="project" value="UniProtKB"/>
</dbReference>
<dbReference type="GO" id="GO:0019046">
    <property type="term" value="P:release from viral latency"/>
    <property type="evidence" value="ECO:0000250"/>
    <property type="project" value="UniProtKB"/>
</dbReference>
<dbReference type="GO" id="GO:0006986">
    <property type="term" value="P:response to unfolded protein"/>
    <property type="evidence" value="ECO:0007669"/>
    <property type="project" value="UniProtKB-KW"/>
</dbReference>
<dbReference type="CDD" id="cd14689">
    <property type="entry name" value="bZIP_CREB3"/>
    <property type="match status" value="1"/>
</dbReference>
<dbReference type="FunFam" id="1.20.5.170:FF:000042">
    <property type="entry name" value="Cyclic AMP-responsive element-binding protein 3-like protein 3"/>
    <property type="match status" value="1"/>
</dbReference>
<dbReference type="Gene3D" id="1.20.5.170">
    <property type="match status" value="1"/>
</dbReference>
<dbReference type="InterPro" id="IPR004827">
    <property type="entry name" value="bZIP"/>
</dbReference>
<dbReference type="InterPro" id="IPR046347">
    <property type="entry name" value="bZIP_sf"/>
</dbReference>
<dbReference type="InterPro" id="IPR051381">
    <property type="entry name" value="CREB_ATF_subfamily"/>
</dbReference>
<dbReference type="PANTHER" id="PTHR45996">
    <property type="entry name" value="AGAP001464-PB"/>
    <property type="match status" value="1"/>
</dbReference>
<dbReference type="PANTHER" id="PTHR45996:SF4">
    <property type="entry name" value="CYCLIC AMP-RESPONSIVE ELEMENT-BINDING PROTEIN 3"/>
    <property type="match status" value="1"/>
</dbReference>
<dbReference type="Pfam" id="PF00170">
    <property type="entry name" value="bZIP_1"/>
    <property type="match status" value="1"/>
</dbReference>
<dbReference type="SMART" id="SM00338">
    <property type="entry name" value="BRLZ"/>
    <property type="match status" value="1"/>
</dbReference>
<dbReference type="SUPFAM" id="SSF57959">
    <property type="entry name" value="Leucine zipper domain"/>
    <property type="match status" value="1"/>
</dbReference>
<dbReference type="PROSITE" id="PS50217">
    <property type="entry name" value="BZIP"/>
    <property type="match status" value="1"/>
</dbReference>
<dbReference type="PROSITE" id="PS00036">
    <property type="entry name" value="BZIP_BASIC"/>
    <property type="match status" value="1"/>
</dbReference>
<comment type="function">
    <text evidence="2">Endoplasmic reticulum (ER)-bound sequence-specific transcription factor that directly binds DNA and activates transcription. Plays a role in the unfolded protein response (UPR), promoting cell survival versus ER stress-induced apoptotic cell death. Also involved in cell proliferation, migration and differentiation, tumor suppression and inflammatory gene expression. Acts as a positive regulator of LKN-1/CCL15-induced chemotaxis signaling of leukocyte cell migration. Associates with chromatin to the HERPUD1 promoter. Also induces transcriptional activation of chemokine receptors. Functions as a negative transcriptional regulator in ligand-induced transcriptional activation of the glucocorticoid receptor NR3C1 by recruiting and activating histone deacetylases (HDAC1, HDAC2 and HDAC6). Also decreases the acetylation level of histone H4. Does not promote the chemotactic activity of leukocyte cells.</text>
</comment>
<comment type="function">
    <molecule>Processed cyclic AMP-responsive element-binding protein 3</molecule>
    <text evidence="2">This is the transcriptionally active form that translocates to the nucleus and activates unfolded protein response (UPR) target genes during endoplasmic reticulum (ER) stress response. Binds the cAMP response element (CRE) (consensus: 5'-GTGACGT[AG][AG]-3') and C/EBP sequences present in many promoters to activate transcription of the genes. Binds to the unfolded protein response element (UPRE) consensus sequences sites. Binds DNA to the 5'-CCAC[GA]-3'half of ERSE II (5'-ATTGG-N-CCACG-3').</text>
</comment>
<comment type="subunit">
    <text evidence="2">Homodimer. Interacts with HCFC1; the interaction is required to stimulate CREB3 transcriptional activity. Interacts with CREBZF; the interaction occurs only in combination with HCFC1. Interacts (via central part and transmembrane region) with DCSTAMP (via C-terminus cytoplasmic domain). Interacts with OS9. Interacts (via leucine-zipper domain) with CREBRF (via leucine-zipper domain); the interaction occurs only after CREB3 activation and promotes CREB3 degradation. Interacts (via C-terminal domain) with CCR1.</text>
</comment>
<comment type="subcellular location">
    <subcellularLocation>
        <location evidence="2">Endoplasmic reticulum membrane</location>
        <topology evidence="2 3">Single-pass type II membrane protein</topology>
    </subcellularLocation>
    <subcellularLocation>
        <location evidence="2">Golgi apparatus</location>
    </subcellularLocation>
    <subcellularLocation>
        <location evidence="2">Nucleus</location>
    </subcellularLocation>
    <subcellularLocation>
        <location evidence="2">Cytoplasm</location>
    </subcellularLocation>
    <text evidence="2">Colocalizes with HCFC1 in neuronal cell bodies of the trigeminal ganglia. Colocalizes with DCSTAMP in the ER membrane of immature dendritic cell (DC). Colocalizes with CANX, CCR1, HCFC1 in the ER membrane.</text>
</comment>
<comment type="subcellular location">
    <molecule>Processed cyclic AMP-responsive element-binding protein 3</molecule>
    <subcellularLocation>
        <location evidence="2">Nucleus</location>
    </subcellularLocation>
    <text evidence="2">Upon RIP activation the transcriptional active processed cyclic AMP-responsive element-binding protein 3 form translocates into the nucleus. Detected in the nucleus upon dendritic cell maturation and RIP activation. Colocalizes with CREBRF in nuclear foci. Colocalizes with CREBZF in promyelocytic leukemia protein nuclear bodies (PML-NB).</text>
</comment>
<comment type="alternative products">
    <event type="alternative splicing"/>
    <isoform>
        <id>Q61817-1</id>
        <name>1</name>
        <name>LZIP-1</name>
        <sequence type="displayed"/>
    </isoform>
    <isoform>
        <id>Q61817-2</id>
        <name>2</name>
        <name>LZIP-2</name>
        <sequence type="described" ref="VSP_011839"/>
    </isoform>
</comment>
<comment type="tissue specificity">
    <text evidence="6">Widely expressed.</text>
</comment>
<comment type="PTM">
    <text evidence="2">First proteolytically cleaved by site-1 protease (S1P) that generates membrane-associated N-terminus and a luminal C-terminus forms. The membrane-associated N-terminus form is further proteolytically processed probably by the site-2 protease (S2P) through a regulated intramembrane proteolysis (RIP), releasing the transcriptional active processed cyclic AMP-responsive element-binding protein 3 form, which is transported to the nucleus. The proteolytic cleavage is strongly induced during dendritic cell (DC) maturation and inhibited by DCSTAMP. That form is rapidly degraded.</text>
</comment>
<comment type="PTM">
    <text evidence="2">N-glycosylated.</text>
</comment>
<comment type="similarity">
    <text evidence="8">Belongs to the bZIP family. ATF subfamily.</text>
</comment>
<accession>Q61817</accession>
<accession>Q99M21</accession>
<accession>Q9CVK9</accession>
<evidence type="ECO:0000250" key="1"/>
<evidence type="ECO:0000250" key="2">
    <source>
        <dbReference type="UniProtKB" id="O43889"/>
    </source>
</evidence>
<evidence type="ECO:0000255" key="3"/>
<evidence type="ECO:0000255" key="4">
    <source>
        <dbReference type="PROSITE-ProRule" id="PRU00978"/>
    </source>
</evidence>
<evidence type="ECO:0000256" key="5">
    <source>
        <dbReference type="SAM" id="MobiDB-lite"/>
    </source>
</evidence>
<evidence type="ECO:0000269" key="6">
    <source>
    </source>
</evidence>
<evidence type="ECO:0000303" key="7">
    <source>
    </source>
</evidence>
<evidence type="ECO:0000305" key="8"/>
<sequence>MDPGGQDLLALDPGDQDLLGFLLEESGDLWAATEPDVKASLDLELSPSENSVQELSDWEVEDLLSSLLSPSVSRDVLGSSSSSILHDHNYSLPQEHVSIDLGECEMISCRGRRELTGLAGSTFPFADTESFEKEGFHVTPLPGEERAAEQEMSRLILTEEEKKLLEKEGLTLPSTLPLTKVEEQVLKRVRRKIRNKRAAQESRKKKKVYVVGLESRVLKYTAQNRELQNKVQRLEEQNLSLLDQLRKLQAMVIEIANKTSSGSTCVLVLVFSFCLLLVPAMYSSDARGSVPAEYVVLHRKLRALPSEDDHQPKPSALSSELPMDSTHQSLDSSEHMFLVSSNFSCVLYHAPQAEQPLHWPLWDLSSEMLFSDSNLLLQANLSESEGWQPNHSPSLVIFQGRYSG</sequence>
<protein>
    <recommendedName>
        <fullName>Cyclic AMP-responsive element-binding protein 3</fullName>
        <shortName>CREB-3</shortName>
        <shortName>cAMP-responsive element-binding protein 3</shortName>
    </recommendedName>
    <alternativeName>
        <fullName>Transcription factor LZIP</fullName>
    </alternativeName>
    <component>
        <recommendedName>
            <fullName>Processed cyclic AMP-responsive element-binding protein 3</fullName>
        </recommendedName>
    </component>
</protein>
<gene>
    <name type="primary">Creb3</name>
    <name type="synonym">Lzip</name>
</gene>